<organism>
    <name type="scientific">Halobacterium salinarum (strain ATCC 700922 / JCM 11081 / NRC-1)</name>
    <name type="common">Halobacterium halobium</name>
    <dbReference type="NCBI Taxonomy" id="64091"/>
    <lineage>
        <taxon>Archaea</taxon>
        <taxon>Methanobacteriati</taxon>
        <taxon>Methanobacteriota</taxon>
        <taxon>Stenosarchaea group</taxon>
        <taxon>Halobacteria</taxon>
        <taxon>Halobacteriales</taxon>
        <taxon>Halobacteriaceae</taxon>
        <taxon>Halobacterium</taxon>
        <taxon>Halobacterium salinarum NRC-34001</taxon>
    </lineage>
</organism>
<evidence type="ECO:0000255" key="1">
    <source>
        <dbReference type="HAMAP-Rule" id="MF_00039"/>
    </source>
</evidence>
<protein>
    <recommendedName>
        <fullName evidence="1">Putative adenylate kinase</fullName>
        <shortName evidence="1">AK</shortName>
        <ecNumber evidence="1">2.7.4.3</ecNumber>
    </recommendedName>
    <alternativeName>
        <fullName evidence="1">ATP-AMP transphosphorylase</fullName>
    </alternativeName>
</protein>
<accession>Q9HQS1</accession>
<name>KAD6_HALSA</name>
<feature type="chain" id="PRO_0000153904" description="Putative adenylate kinase">
    <location>
        <begin position="1"/>
        <end position="169"/>
    </location>
</feature>
<feature type="region of interest" description="NMP" evidence="1">
    <location>
        <begin position="28"/>
        <end position="51"/>
    </location>
</feature>
<feature type="region of interest" description="LID" evidence="1">
    <location>
        <begin position="98"/>
        <end position="108"/>
    </location>
</feature>
<feature type="binding site" evidence="1">
    <location>
        <position position="10"/>
    </location>
    <ligand>
        <name>ATP</name>
        <dbReference type="ChEBI" id="CHEBI:30616"/>
    </ligand>
</feature>
<feature type="binding site" evidence="1">
    <location>
        <position position="12"/>
    </location>
    <ligand>
        <name>ATP</name>
        <dbReference type="ChEBI" id="CHEBI:30616"/>
    </ligand>
</feature>
<feature type="binding site" evidence="1">
    <location>
        <position position="13"/>
    </location>
    <ligand>
        <name>ATP</name>
        <dbReference type="ChEBI" id="CHEBI:30616"/>
    </ligand>
</feature>
<feature type="binding site" evidence="1">
    <location>
        <position position="14"/>
    </location>
    <ligand>
        <name>ATP</name>
        <dbReference type="ChEBI" id="CHEBI:30616"/>
    </ligand>
</feature>
<feature type="binding site" evidence="1">
    <location>
        <position position="15"/>
    </location>
    <ligand>
        <name>ATP</name>
        <dbReference type="ChEBI" id="CHEBI:30616"/>
    </ligand>
</feature>
<feature type="binding site" evidence="1">
    <location>
        <position position="99"/>
    </location>
    <ligand>
        <name>ATP</name>
        <dbReference type="ChEBI" id="CHEBI:30616"/>
    </ligand>
</feature>
<comment type="function">
    <text evidence="1">Broad-specificity nucleoside monophosphate (NMP) kinase that catalyzes the reversible transfer of the terminal phosphate group between nucleoside triphosphates and monophosphates. Also has ATPase activity. Involved in the late maturation steps of the 30S ribosomal particles, specifically 16S rRNA maturation. While NMP activity is not required for ribosome maturation, ATPase activity is. Associates transiently with small ribosomal subunit protein uS11. ATP hydrolysis breaks the interaction with uS11. May temporarily remove uS11 from the ribosome to enable a conformational change of the ribosomal RNA that is needed for the final maturation step of the small ribosomal subunit.</text>
</comment>
<comment type="catalytic activity">
    <reaction evidence="1">
        <text>AMP + ATP = 2 ADP</text>
        <dbReference type="Rhea" id="RHEA:12973"/>
        <dbReference type="ChEBI" id="CHEBI:30616"/>
        <dbReference type="ChEBI" id="CHEBI:456215"/>
        <dbReference type="ChEBI" id="CHEBI:456216"/>
        <dbReference type="EC" id="2.7.4.3"/>
    </reaction>
</comment>
<comment type="catalytic activity">
    <reaction evidence="1">
        <text>ATP + H2O = ADP + phosphate + H(+)</text>
        <dbReference type="Rhea" id="RHEA:13065"/>
        <dbReference type="ChEBI" id="CHEBI:15377"/>
        <dbReference type="ChEBI" id="CHEBI:15378"/>
        <dbReference type="ChEBI" id="CHEBI:30616"/>
        <dbReference type="ChEBI" id="CHEBI:43474"/>
        <dbReference type="ChEBI" id="CHEBI:456216"/>
    </reaction>
</comment>
<comment type="subunit">
    <text evidence="1">Interacts with uS11. Not a structural component of 40S pre-ribosomes, but transiently interacts with them by binding to uS11.</text>
</comment>
<comment type="similarity">
    <text evidence="1">Belongs to the adenylate kinase family. AK6 subfamily.</text>
</comment>
<dbReference type="EC" id="2.7.4.3" evidence="1"/>
<dbReference type="EMBL" id="AE004437">
    <property type="protein sequence ID" value="AAG19442.1"/>
    <property type="molecule type" value="Genomic_DNA"/>
</dbReference>
<dbReference type="PIR" id="F84259">
    <property type="entry name" value="F84259"/>
</dbReference>
<dbReference type="RefSeq" id="WP_010902737.1">
    <property type="nucleotide sequence ID" value="NC_002607.1"/>
</dbReference>
<dbReference type="SMR" id="Q9HQS1"/>
<dbReference type="FunCoup" id="Q9HQS1">
    <property type="interactions" value="162"/>
</dbReference>
<dbReference type="STRING" id="64091.VNG_1031C"/>
<dbReference type="PaxDb" id="64091-VNG_1031C"/>
<dbReference type="KEGG" id="hal:VNG_1031C"/>
<dbReference type="PATRIC" id="fig|64091.14.peg.789"/>
<dbReference type="HOGENOM" id="CLU_079096_0_1_2"/>
<dbReference type="InParanoid" id="Q9HQS1"/>
<dbReference type="OrthoDB" id="8730at2157"/>
<dbReference type="PhylomeDB" id="Q9HQS1"/>
<dbReference type="Proteomes" id="UP000000554">
    <property type="component" value="Chromosome"/>
</dbReference>
<dbReference type="GO" id="GO:0004017">
    <property type="term" value="F:adenylate kinase activity"/>
    <property type="evidence" value="ECO:0007669"/>
    <property type="project" value="UniProtKB-UniRule"/>
</dbReference>
<dbReference type="GO" id="GO:0005524">
    <property type="term" value="F:ATP binding"/>
    <property type="evidence" value="ECO:0007669"/>
    <property type="project" value="UniProtKB-UniRule"/>
</dbReference>
<dbReference type="GO" id="GO:0016887">
    <property type="term" value="F:ATP hydrolysis activity"/>
    <property type="evidence" value="ECO:0007669"/>
    <property type="project" value="InterPro"/>
</dbReference>
<dbReference type="GO" id="GO:0042274">
    <property type="term" value="P:ribosomal small subunit biogenesis"/>
    <property type="evidence" value="ECO:0007669"/>
    <property type="project" value="UniProtKB-UniRule"/>
</dbReference>
<dbReference type="GO" id="GO:0006364">
    <property type="term" value="P:rRNA processing"/>
    <property type="evidence" value="ECO:0007669"/>
    <property type="project" value="UniProtKB-KW"/>
</dbReference>
<dbReference type="Gene3D" id="3.40.50.300">
    <property type="entry name" value="P-loop containing nucleotide triphosphate hydrolases"/>
    <property type="match status" value="1"/>
</dbReference>
<dbReference type="HAMAP" id="MF_00039">
    <property type="entry name" value="Adenylate_kinase_AK6"/>
    <property type="match status" value="1"/>
</dbReference>
<dbReference type="InterPro" id="IPR020618">
    <property type="entry name" value="Adenyl_kinase_AK6"/>
</dbReference>
<dbReference type="InterPro" id="IPR027417">
    <property type="entry name" value="P-loop_NTPase"/>
</dbReference>
<dbReference type="PANTHER" id="PTHR12595:SF0">
    <property type="entry name" value="ADENYLATE KINASE ISOENZYME 6"/>
    <property type="match status" value="1"/>
</dbReference>
<dbReference type="PANTHER" id="PTHR12595">
    <property type="entry name" value="POS9-ACTIVATING FACTOR FAP7-RELATED"/>
    <property type="match status" value="1"/>
</dbReference>
<dbReference type="Pfam" id="PF13238">
    <property type="entry name" value="AAA_18"/>
    <property type="match status" value="1"/>
</dbReference>
<dbReference type="SUPFAM" id="SSF52540">
    <property type="entry name" value="P-loop containing nucleoside triphosphate hydrolases"/>
    <property type="match status" value="1"/>
</dbReference>
<keyword id="KW-0067">ATP-binding</keyword>
<keyword id="KW-0418">Kinase</keyword>
<keyword id="KW-0547">Nucleotide-binding</keyword>
<keyword id="KW-1185">Reference proteome</keyword>
<keyword id="KW-0690">Ribosome biogenesis</keyword>
<keyword id="KW-0698">rRNA processing</keyword>
<keyword id="KW-0808">Transferase</keyword>
<proteinExistence type="inferred from homology"/>
<reference key="1">
    <citation type="journal article" date="2000" name="Proc. Natl. Acad. Sci. U.S.A.">
        <title>Genome sequence of Halobacterium species NRC-1.</title>
        <authorList>
            <person name="Ng W.V."/>
            <person name="Kennedy S.P."/>
            <person name="Mahairas G.G."/>
            <person name="Berquist B."/>
            <person name="Pan M."/>
            <person name="Shukla H.D."/>
            <person name="Lasky S.R."/>
            <person name="Baliga N.S."/>
            <person name="Thorsson V."/>
            <person name="Sbrogna J."/>
            <person name="Swartzell S."/>
            <person name="Weir D."/>
            <person name="Hall J."/>
            <person name="Dahl T.A."/>
            <person name="Welti R."/>
            <person name="Goo Y.A."/>
            <person name="Leithauser B."/>
            <person name="Keller K."/>
            <person name="Cruz R."/>
            <person name="Danson M.J."/>
            <person name="Hough D.W."/>
            <person name="Maddocks D.G."/>
            <person name="Jablonski P.E."/>
            <person name="Krebs M.P."/>
            <person name="Angevine C.M."/>
            <person name="Dale H."/>
            <person name="Isenbarger T.A."/>
            <person name="Peck R.F."/>
            <person name="Pohlschroder M."/>
            <person name="Spudich J.L."/>
            <person name="Jung K.-H."/>
            <person name="Alam M."/>
            <person name="Freitas T."/>
            <person name="Hou S."/>
            <person name="Daniels C.J."/>
            <person name="Dennis P.P."/>
            <person name="Omer A.D."/>
            <person name="Ebhardt H."/>
            <person name="Lowe T.M."/>
            <person name="Liang P."/>
            <person name="Riley M."/>
            <person name="Hood L."/>
            <person name="DasSarma S."/>
        </authorList>
    </citation>
    <scope>NUCLEOTIDE SEQUENCE [LARGE SCALE GENOMIC DNA]</scope>
    <source>
        <strain>ATCC 700922 / JCM 11081 / NRC-1</strain>
    </source>
</reference>
<gene>
    <name type="ordered locus">VNG_1031C</name>
</gene>
<sequence length="169" mass="17767">MRVAVTGTPGTGKTTATGRLDTALDVAHLNDLVGTEGLYDGVDADRGSKIVDVDAVRDHFAGREDVLVESHLAHRLDDLDAVVVLRCAPETLATRLQDRGDSPEKAAENADSEALAIILSEAVRGHGADAVYEIDTTDRSPDAVAAAIQAVLDGDREPSAGTVDYTDYV</sequence>